<reference key="1">
    <citation type="journal article" date="1997" name="Virology">
        <title>The sequence of the Orgyia pseudotsugata multinucleocapsid nuclear polyhedrosis virus genome.</title>
        <authorList>
            <person name="Ahrens C.H."/>
            <person name="Russell R.R."/>
            <person name="Funk C.J."/>
            <person name="Evans J."/>
            <person name="Harwood S."/>
            <person name="Rohrmann G.F."/>
        </authorList>
    </citation>
    <scope>NUCLEOTIDE SEQUENCE [LARGE SCALE GENOMIC DNA]</scope>
</reference>
<gene>
    <name type="ORF">ORF19</name>
</gene>
<dbReference type="EMBL" id="U75930">
    <property type="protein sequence ID" value="AAC59018.1"/>
    <property type="molecule type" value="Genomic_DNA"/>
</dbReference>
<dbReference type="RefSeq" id="NP_046175.1">
    <property type="nucleotide sequence ID" value="NC_001875.2"/>
</dbReference>
<dbReference type="KEGG" id="vg:912054"/>
<dbReference type="OrthoDB" id="9234at10239"/>
<dbReference type="Proteomes" id="UP000009248">
    <property type="component" value="Genome"/>
</dbReference>
<dbReference type="InterPro" id="IPR010639">
    <property type="entry name" value="Actin-rearrang-inducing_fac"/>
</dbReference>
<dbReference type="Pfam" id="PF06770">
    <property type="entry name" value="Arif-1"/>
    <property type="match status" value="1"/>
</dbReference>
<sequence length="298" mass="34666">MLVQVNYFLQLVLHAALFGLCSFAFVFALMATVTARYAFLLELEDSAHSIINLSHLAAFLLGPYVLATITWAMYKMLLCYKGLEMRSNFYMKTVVALAHLMAGSCWLLFVVFQPQIHKNGHVPVLDALIRHHDRQSLCWSGVVVQEYEVHDANAIRTDLNCVYYDNFMKKCVGCRMEVRHDEPTVFNQNQGALTMLALLAIVMHCWNMYVQQKETRRKPNRARNITNTLLMETEKEYDTAEEEEHESNMRSWILSARRARNRPHNYFPFCRQTGQTQNVSRLIFQHKRRARQVPPTAE</sequence>
<keyword id="KW-1185">Reference proteome</keyword>
<organism>
    <name type="scientific">Orgyia pseudotsugata multicapsid polyhedrosis virus</name>
    <name type="common">OpMNPV</name>
    <dbReference type="NCBI Taxonomy" id="262177"/>
    <lineage>
        <taxon>Viruses</taxon>
        <taxon>Viruses incertae sedis</taxon>
        <taxon>Naldaviricetes</taxon>
        <taxon>Lefavirales</taxon>
        <taxon>Baculoviridae</taxon>
        <taxon>Alphabaculovirus</taxon>
        <taxon>Alphabaculovirus orpseudotsugatae</taxon>
    </lineage>
</organism>
<accession>O10280</accession>
<proteinExistence type="predicted"/>
<organismHost>
    <name type="scientific">Orgyia pseudotsugata</name>
    <name type="common">Douglas-fir tussock moth</name>
    <dbReference type="NCBI Taxonomy" id="33414"/>
</organismHost>
<feature type="chain" id="PRO_0000132956" description="Uncharacterized 34.7 kDa protein">
    <location>
        <begin position="1"/>
        <end position="298"/>
    </location>
</feature>
<protein>
    <recommendedName>
        <fullName>Uncharacterized 34.7 kDa protein</fullName>
    </recommendedName>
</protein>
<name>Y021_NPVOP</name>